<accession>P07243</accession>
<keyword id="KW-0002">3D-structure</keyword>
<keyword id="KW-0804">Transcription</keyword>
<keyword id="KW-0805">Transcription regulation</keyword>
<keyword id="KW-0806">Transcription termination</keyword>
<reference key="1">
    <citation type="journal article" date="1985" name="J. Mol. Biol.">
        <title>Conservation of genome form but not sequence in the transcription antitermination determinants of bacteriophages lambda, phi 21 and P22.</title>
        <authorList>
            <person name="Franklin N.C."/>
        </authorList>
    </citation>
    <scope>NUCLEOTIDE SEQUENCE [GENOMIC DNA]</scope>
</reference>
<organismHost>
    <name type="scientific">Bacillus subtilis</name>
    <dbReference type="NCBI Taxonomy" id="1423"/>
</organismHost>
<dbReference type="EMBL" id="AH007390">
    <property type="protein sequence ID" value="AAD15033.1"/>
    <property type="molecule type" value="Genomic_DNA"/>
</dbReference>
<dbReference type="PDB" id="1NYB">
    <property type="method" value="NMR"/>
    <property type="chains" value="A=8-29"/>
</dbReference>
<dbReference type="PDBsum" id="1NYB"/>
<dbReference type="SMR" id="P07243"/>
<dbReference type="GO" id="GO:0006353">
    <property type="term" value="P:DNA-templated transcription termination"/>
    <property type="evidence" value="ECO:0007669"/>
    <property type="project" value="UniProtKB-KW"/>
</dbReference>
<gene>
    <name type="primary">N</name>
</gene>
<proteinExistence type="evidence at protein level"/>
<name>REGN_BPPH3</name>
<organism>
    <name type="scientific">Enterobacteria phage phi21</name>
    <name type="common">Bacteriophage phi-21</name>
    <dbReference type="NCBI Taxonomy" id="10737"/>
    <lineage>
        <taxon>Viruses</taxon>
        <taxon>Duplodnaviria</taxon>
        <taxon>Heunggongvirae</taxon>
        <taxon>Uroviricota</taxon>
        <taxon>Caudoviricetes</taxon>
    </lineage>
</organism>
<protein>
    <recommendedName>
        <fullName>Probable regulatory protein N</fullName>
    </recommendedName>
</protein>
<evidence type="ECO:0007829" key="1">
    <source>
        <dbReference type="PDB" id="1NYB"/>
    </source>
</evidence>
<feature type="chain" id="PRO_0000077582" description="Probable regulatory protein N">
    <location>
        <begin position="1"/>
        <end position="99"/>
    </location>
</feature>
<feature type="helix" evidence="1">
    <location>
        <begin position="13"/>
        <end position="25"/>
    </location>
</feature>
<sequence length="99" mass="11151">MVTIVWKESKGTAKSRYKARRAELIAERRSNEALARKIALKLSGCVRADKAASLGSLRCKKAEEVERKQNRIYYSKPRSEMGVTCVGRQKIKLGSKPLI</sequence>
<comment type="function">
    <text>N protein regulates the transition from the early to the middle stage of lytic development.</text>
</comment>
<comment type="miscellaneous">
    <text>Protein N is an immediate early function essential for all other phage vegetative functions.</text>
</comment>
<comment type="miscellaneous">
    <text>Protein N is required to overcome termination of transcription.</text>
</comment>
<comment type="miscellaneous">
    <text>Protein N is effective in trans at a variety of terminators located at a distance from phage promoters, but absolutely dependent upon lambda-coded sites called nut, which must lie cis to the terminators acted upon.</text>
</comment>
<comment type="miscellaneous">
    <text>Protein N is type specific, in that the antitermination function of one lambdoid phage cannot, in general, complement a mutant function in another.</text>
</comment>
<comment type="miscellaneous">
    <text>Protein N is dependent upon host proteins, known by the existence of mutant host strains which block N function by their direct biochemical interaction with N and by the evidence for a recognition site for one of them (nusA) adjacent to the nut sites in the early operons of lambdoid phages.</text>
</comment>